<protein>
    <recommendedName>
        <fullName>S-ribosylhomocysteine lyase</fullName>
        <ecNumber>4.4.1.21</ecNumber>
    </recommendedName>
    <alternativeName>
        <fullName>AI-2 synthesis protein</fullName>
    </alternativeName>
    <alternativeName>
        <fullName>Autoinducer-2 production protein LuxS</fullName>
    </alternativeName>
</protein>
<evidence type="ECO:0000269" key="1">
    <source>
    </source>
</evidence>
<evidence type="ECO:0000305" key="2"/>
<evidence type="ECO:0007829" key="3">
    <source>
        <dbReference type="PDB" id="1J98"/>
    </source>
</evidence>
<dbReference type="EC" id="4.4.1.21"/>
<dbReference type="EMBL" id="AF008220">
    <property type="protein sequence ID" value="AAC00235.1"/>
    <property type="molecule type" value="Genomic_DNA"/>
</dbReference>
<dbReference type="EMBL" id="AL009126">
    <property type="protein sequence ID" value="CAB15045.1"/>
    <property type="molecule type" value="Genomic_DNA"/>
</dbReference>
<dbReference type="PIR" id="A69994">
    <property type="entry name" value="A69994"/>
</dbReference>
<dbReference type="RefSeq" id="NP_390945.1">
    <property type="nucleotide sequence ID" value="NC_000964.3"/>
</dbReference>
<dbReference type="RefSeq" id="WP_003219361.1">
    <property type="nucleotide sequence ID" value="NZ_OZ025638.1"/>
</dbReference>
<dbReference type="PDB" id="1IE0">
    <property type="method" value="X-ray"/>
    <property type="resolution" value="1.60 A"/>
    <property type="chains" value="A=1-157"/>
</dbReference>
<dbReference type="PDB" id="1J98">
    <property type="method" value="X-ray"/>
    <property type="resolution" value="1.20 A"/>
    <property type="chains" value="A=1-157"/>
</dbReference>
<dbReference type="PDB" id="1JQW">
    <property type="method" value="X-ray"/>
    <property type="resolution" value="2.30 A"/>
    <property type="chains" value="A=1-157"/>
</dbReference>
<dbReference type="PDB" id="1JVI">
    <property type="method" value="X-ray"/>
    <property type="resolution" value="2.20 A"/>
    <property type="chains" value="A=1-157"/>
</dbReference>
<dbReference type="PDB" id="1YCL">
    <property type="method" value="X-ray"/>
    <property type="resolution" value="1.80 A"/>
    <property type="chains" value="A=2-157"/>
</dbReference>
<dbReference type="PDB" id="2FQO">
    <property type="method" value="X-ray"/>
    <property type="resolution" value="1.87 A"/>
    <property type="chains" value="A=1-157"/>
</dbReference>
<dbReference type="PDB" id="2FQT">
    <property type="method" value="X-ray"/>
    <property type="resolution" value="1.79 A"/>
    <property type="chains" value="A=1-157"/>
</dbReference>
<dbReference type="PDBsum" id="1IE0"/>
<dbReference type="PDBsum" id="1J98"/>
<dbReference type="PDBsum" id="1JQW"/>
<dbReference type="PDBsum" id="1JVI"/>
<dbReference type="PDBsum" id="1YCL"/>
<dbReference type="PDBsum" id="2FQO"/>
<dbReference type="PDBsum" id="2FQT"/>
<dbReference type="SMR" id="O34667"/>
<dbReference type="FunCoup" id="O34667">
    <property type="interactions" value="205"/>
</dbReference>
<dbReference type="STRING" id="224308.BSU30670"/>
<dbReference type="BindingDB" id="O34667"/>
<dbReference type="ChEMBL" id="CHEMBL5171"/>
<dbReference type="DrugBank" id="DB04182">
    <property type="generic name" value="(S)-2-Amino-4-[(2s,3r)-2,3,5-Trihydroxy-4-Oxo-Pentyl]Mercapto-Butyric Acid"/>
</dbReference>
<dbReference type="DrugBank" id="DB02321">
    <property type="generic name" value="5-(3-Amino-4,4-Dihyroxy-Butylsulfanylmethyl)-Tetrahydro-Furan-2,3,4-Triol"/>
</dbReference>
<dbReference type="DrugBank" id="DB04422">
    <property type="generic name" value="Homocysteine"/>
</dbReference>
<dbReference type="DrugBank" id="DB03661">
    <property type="generic name" value="L-cysteic acid"/>
</dbReference>
<dbReference type="DrugCentral" id="O34667"/>
<dbReference type="PaxDb" id="224308-BSU30670"/>
<dbReference type="EnsemblBacteria" id="CAB15045">
    <property type="protein sequence ID" value="CAB15045"/>
    <property type="gene ID" value="BSU_30670"/>
</dbReference>
<dbReference type="GeneID" id="937106"/>
<dbReference type="KEGG" id="bsu:BSU30670"/>
<dbReference type="PATRIC" id="fig|224308.179.peg.3325"/>
<dbReference type="eggNOG" id="COG1854">
    <property type="taxonomic scope" value="Bacteria"/>
</dbReference>
<dbReference type="InParanoid" id="O34667"/>
<dbReference type="OrthoDB" id="9788129at2"/>
<dbReference type="PhylomeDB" id="O34667"/>
<dbReference type="BioCyc" id="BSUB:BSU30670-MONOMER"/>
<dbReference type="BioCyc" id="MetaCyc:MONOMER-14557"/>
<dbReference type="BRENDA" id="4.4.1.21">
    <property type="organism ID" value="658"/>
</dbReference>
<dbReference type="SABIO-RK" id="O34667"/>
<dbReference type="EvolutionaryTrace" id="O34667"/>
<dbReference type="Proteomes" id="UP000001570">
    <property type="component" value="Chromosome"/>
</dbReference>
<dbReference type="GO" id="GO:0005829">
    <property type="term" value="C:cytosol"/>
    <property type="evidence" value="ECO:0000318"/>
    <property type="project" value="GO_Central"/>
</dbReference>
<dbReference type="GO" id="GO:0005506">
    <property type="term" value="F:iron ion binding"/>
    <property type="evidence" value="ECO:0007669"/>
    <property type="project" value="InterPro"/>
</dbReference>
<dbReference type="GO" id="GO:0043768">
    <property type="term" value="F:S-ribosylhomocysteine lyase activity"/>
    <property type="evidence" value="ECO:0000318"/>
    <property type="project" value="GO_Central"/>
</dbReference>
<dbReference type="GO" id="GO:0019284">
    <property type="term" value="P:L-methionine salvage from S-adenosylmethionine"/>
    <property type="evidence" value="ECO:0000318"/>
    <property type="project" value="GO_Central"/>
</dbReference>
<dbReference type="GO" id="GO:0009372">
    <property type="term" value="P:quorum sensing"/>
    <property type="evidence" value="ECO:0007669"/>
    <property type="project" value="UniProtKB-UniRule"/>
</dbReference>
<dbReference type="Gene3D" id="3.30.1360.80">
    <property type="entry name" value="S-ribosylhomocysteinase (LuxS)"/>
    <property type="match status" value="1"/>
</dbReference>
<dbReference type="HAMAP" id="MF_00091">
    <property type="entry name" value="LuxS"/>
    <property type="match status" value="1"/>
</dbReference>
<dbReference type="InterPro" id="IPR037005">
    <property type="entry name" value="LuxS_sf"/>
</dbReference>
<dbReference type="InterPro" id="IPR011249">
    <property type="entry name" value="Metalloenz_LuxS/M16"/>
</dbReference>
<dbReference type="InterPro" id="IPR003815">
    <property type="entry name" value="S-ribosylhomocysteinase"/>
</dbReference>
<dbReference type="NCBIfam" id="NF002603">
    <property type="entry name" value="PRK02260.1-3"/>
    <property type="match status" value="1"/>
</dbReference>
<dbReference type="PANTHER" id="PTHR35799">
    <property type="entry name" value="S-RIBOSYLHOMOCYSTEINE LYASE"/>
    <property type="match status" value="1"/>
</dbReference>
<dbReference type="PANTHER" id="PTHR35799:SF1">
    <property type="entry name" value="S-RIBOSYLHOMOCYSTEINE LYASE"/>
    <property type="match status" value="1"/>
</dbReference>
<dbReference type="Pfam" id="PF02664">
    <property type="entry name" value="LuxS"/>
    <property type="match status" value="1"/>
</dbReference>
<dbReference type="PIRSF" id="PIRSF006160">
    <property type="entry name" value="AI2"/>
    <property type="match status" value="1"/>
</dbReference>
<dbReference type="PRINTS" id="PR01487">
    <property type="entry name" value="LUXSPROTEIN"/>
</dbReference>
<dbReference type="SUPFAM" id="SSF63411">
    <property type="entry name" value="LuxS/MPP-like metallohydrolase"/>
    <property type="match status" value="1"/>
</dbReference>
<sequence>MPSVESFELDHNAVVAPYVRHCGVHKVGTDGVVNKFDIRFCQPNKQAMKPDTIHTLEHLLAFTIRSHAEKYDHFDIIDISPMGCQTGYYLVVSGEPTSAEIVDLLEDTMKEAVEITEIPAANEKQCGQAKLHDLEGAKRLMRFWLSQDKEELLKVFG</sequence>
<organism>
    <name type="scientific">Bacillus subtilis (strain 168)</name>
    <dbReference type="NCBI Taxonomy" id="224308"/>
    <lineage>
        <taxon>Bacteria</taxon>
        <taxon>Bacillati</taxon>
        <taxon>Bacillota</taxon>
        <taxon>Bacilli</taxon>
        <taxon>Bacillales</taxon>
        <taxon>Bacillaceae</taxon>
        <taxon>Bacillus</taxon>
    </lineage>
</organism>
<gene>
    <name type="primary">luxS</name>
    <name type="synonym">ytjB</name>
    <name type="ordered locus">BSU30670</name>
</gene>
<reference key="1">
    <citation type="journal article" date="1997" name="Microbiology">
        <title>Sequencing and functional annotation of the Bacillus subtilis genes in the 200 kb rrnB-dnaB region.</title>
        <authorList>
            <person name="Lapidus A."/>
            <person name="Galleron N."/>
            <person name="Sorokin A."/>
            <person name="Ehrlich S.D."/>
        </authorList>
    </citation>
    <scope>NUCLEOTIDE SEQUENCE [GENOMIC DNA]</scope>
    <source>
        <strain>168</strain>
    </source>
</reference>
<reference key="2">
    <citation type="journal article" date="1997" name="Nature">
        <title>The complete genome sequence of the Gram-positive bacterium Bacillus subtilis.</title>
        <authorList>
            <person name="Kunst F."/>
            <person name="Ogasawara N."/>
            <person name="Moszer I."/>
            <person name="Albertini A.M."/>
            <person name="Alloni G."/>
            <person name="Azevedo V."/>
            <person name="Bertero M.G."/>
            <person name="Bessieres P."/>
            <person name="Bolotin A."/>
            <person name="Borchert S."/>
            <person name="Borriss R."/>
            <person name="Boursier L."/>
            <person name="Brans A."/>
            <person name="Braun M."/>
            <person name="Brignell S.C."/>
            <person name="Bron S."/>
            <person name="Brouillet S."/>
            <person name="Bruschi C.V."/>
            <person name="Caldwell B."/>
            <person name="Capuano V."/>
            <person name="Carter N.M."/>
            <person name="Choi S.-K."/>
            <person name="Codani J.-J."/>
            <person name="Connerton I.F."/>
            <person name="Cummings N.J."/>
            <person name="Daniel R.A."/>
            <person name="Denizot F."/>
            <person name="Devine K.M."/>
            <person name="Duesterhoeft A."/>
            <person name="Ehrlich S.D."/>
            <person name="Emmerson P.T."/>
            <person name="Entian K.-D."/>
            <person name="Errington J."/>
            <person name="Fabret C."/>
            <person name="Ferrari E."/>
            <person name="Foulger D."/>
            <person name="Fritz C."/>
            <person name="Fujita M."/>
            <person name="Fujita Y."/>
            <person name="Fuma S."/>
            <person name="Galizzi A."/>
            <person name="Galleron N."/>
            <person name="Ghim S.-Y."/>
            <person name="Glaser P."/>
            <person name="Goffeau A."/>
            <person name="Golightly E.J."/>
            <person name="Grandi G."/>
            <person name="Guiseppi G."/>
            <person name="Guy B.J."/>
            <person name="Haga K."/>
            <person name="Haiech J."/>
            <person name="Harwood C.R."/>
            <person name="Henaut A."/>
            <person name="Hilbert H."/>
            <person name="Holsappel S."/>
            <person name="Hosono S."/>
            <person name="Hullo M.-F."/>
            <person name="Itaya M."/>
            <person name="Jones L.-M."/>
            <person name="Joris B."/>
            <person name="Karamata D."/>
            <person name="Kasahara Y."/>
            <person name="Klaerr-Blanchard M."/>
            <person name="Klein C."/>
            <person name="Kobayashi Y."/>
            <person name="Koetter P."/>
            <person name="Koningstein G."/>
            <person name="Krogh S."/>
            <person name="Kumano M."/>
            <person name="Kurita K."/>
            <person name="Lapidus A."/>
            <person name="Lardinois S."/>
            <person name="Lauber J."/>
            <person name="Lazarevic V."/>
            <person name="Lee S.-M."/>
            <person name="Levine A."/>
            <person name="Liu H."/>
            <person name="Masuda S."/>
            <person name="Mauel C."/>
            <person name="Medigue C."/>
            <person name="Medina N."/>
            <person name="Mellado R.P."/>
            <person name="Mizuno M."/>
            <person name="Moestl D."/>
            <person name="Nakai S."/>
            <person name="Noback M."/>
            <person name="Noone D."/>
            <person name="O'Reilly M."/>
            <person name="Ogawa K."/>
            <person name="Ogiwara A."/>
            <person name="Oudega B."/>
            <person name="Park S.-H."/>
            <person name="Parro V."/>
            <person name="Pohl T.M."/>
            <person name="Portetelle D."/>
            <person name="Porwollik S."/>
            <person name="Prescott A.M."/>
            <person name="Presecan E."/>
            <person name="Pujic P."/>
            <person name="Purnelle B."/>
            <person name="Rapoport G."/>
            <person name="Rey M."/>
            <person name="Reynolds S."/>
            <person name="Rieger M."/>
            <person name="Rivolta C."/>
            <person name="Rocha E."/>
            <person name="Roche B."/>
            <person name="Rose M."/>
            <person name="Sadaie Y."/>
            <person name="Sato T."/>
            <person name="Scanlan E."/>
            <person name="Schleich S."/>
            <person name="Schroeter R."/>
            <person name="Scoffone F."/>
            <person name="Sekiguchi J."/>
            <person name="Sekowska A."/>
            <person name="Seror S.J."/>
            <person name="Serror P."/>
            <person name="Shin B.-S."/>
            <person name="Soldo B."/>
            <person name="Sorokin A."/>
            <person name="Tacconi E."/>
            <person name="Takagi T."/>
            <person name="Takahashi H."/>
            <person name="Takemaru K."/>
            <person name="Takeuchi M."/>
            <person name="Tamakoshi A."/>
            <person name="Tanaka T."/>
            <person name="Terpstra P."/>
            <person name="Tognoni A."/>
            <person name="Tosato V."/>
            <person name="Uchiyama S."/>
            <person name="Vandenbol M."/>
            <person name="Vannier F."/>
            <person name="Vassarotti A."/>
            <person name="Viari A."/>
            <person name="Wambutt R."/>
            <person name="Wedler E."/>
            <person name="Wedler H."/>
            <person name="Weitzenegger T."/>
            <person name="Winters P."/>
            <person name="Wipat A."/>
            <person name="Yamamoto H."/>
            <person name="Yamane K."/>
            <person name="Yasumoto K."/>
            <person name="Yata K."/>
            <person name="Yoshida K."/>
            <person name="Yoshikawa H.-F."/>
            <person name="Zumstein E."/>
            <person name="Yoshikawa H."/>
            <person name="Danchin A."/>
        </authorList>
    </citation>
    <scope>NUCLEOTIDE SEQUENCE [LARGE SCALE GENOMIC DNA]</scope>
    <source>
        <strain>168</strain>
    </source>
</reference>
<reference key="3">
    <citation type="journal article" date="2003" name="Biochemistry">
        <title>S-ribosylhomocysteinase (LuxS) is a mononuclear iron protein.</title>
        <authorList>
            <person name="Zhu J."/>
            <person name="Dizin E."/>
            <person name="Hu X."/>
            <person name="Wavreille A.-S."/>
            <person name="Park J."/>
            <person name="Pei D."/>
        </authorList>
    </citation>
    <scope>COFACTOR</scope>
    <scope>CHARACTERIZATION</scope>
    <scope>MUTAGENESIS OF GLU-57 AND CYS-84</scope>
</reference>
<reference key="4">
    <citation type="journal article" date="2001" name="J. Mol. Biol.">
        <title>The 1.2 A structure of a novel quorum-sensing protein, Bacillus subtilis LuxS.</title>
        <authorList>
            <person name="Ruzheinikov S.N."/>
            <person name="Das S.K."/>
            <person name="Sedelnikova S.E."/>
            <person name="Hartley A."/>
            <person name="Foster S.J."/>
            <person name="Horsburgh M.J."/>
            <person name="Cox A.G."/>
            <person name="McCleod C.W."/>
            <person name="Mekhalfia A."/>
            <person name="Blackburn G.M."/>
            <person name="Rice D.W."/>
            <person name="Baker P.J."/>
        </authorList>
    </citation>
    <scope>X-RAY CRYSTALLOGRAPHY (1.2 ANGSTROMS)</scope>
</reference>
<reference key="5">
    <citation type="journal article" date="2001" name="Proc. Natl. Acad. Sci. U.S.A.">
        <title>Crystal structure of the quorum-sensing protein LuxS reveals a catalytic metal site.</title>
        <authorList>
            <person name="Hilgers M.T."/>
            <person name="Ludwig M.L."/>
        </authorList>
    </citation>
    <scope>X-RAY CRYSTALLOGRAPHY (1.6 ANGSTROMS)</scope>
</reference>
<accession>O34667</accession>
<feature type="chain" id="PRO_0000172211" description="S-ribosylhomocysteine lyase">
    <location>
        <begin position="1"/>
        <end position="157"/>
    </location>
</feature>
<feature type="binding site">
    <location>
        <position position="54"/>
    </location>
    <ligand>
        <name>Fe cation</name>
        <dbReference type="ChEBI" id="CHEBI:24875"/>
    </ligand>
</feature>
<feature type="binding site">
    <location>
        <position position="58"/>
    </location>
    <ligand>
        <name>Fe cation</name>
        <dbReference type="ChEBI" id="CHEBI:24875"/>
    </ligand>
</feature>
<feature type="binding site">
    <location>
        <position position="126"/>
    </location>
    <ligand>
        <name>Fe cation</name>
        <dbReference type="ChEBI" id="CHEBI:24875"/>
    </ligand>
</feature>
<feature type="mutagenesis site" description="Complete loss of activity." evidence="1">
    <original>E</original>
    <variation>A</variation>
    <variation>Q</variation>
    <location>
        <position position="57"/>
    </location>
</feature>
<feature type="mutagenesis site" description="220-fold decrease in activity." evidence="1">
    <original>E</original>
    <variation>D</variation>
    <location>
        <position position="57"/>
    </location>
</feature>
<feature type="mutagenesis site" description="Complete loss of activity." evidence="1">
    <original>C</original>
    <variation>A</variation>
    <location>
        <position position="84"/>
    </location>
</feature>
<feature type="mutagenesis site" description="Almost complete loss of activity." evidence="1">
    <original>C</original>
    <variation>D</variation>
    <variation>S</variation>
    <location>
        <position position="84"/>
    </location>
</feature>
<feature type="helix" evidence="3">
    <location>
        <begin position="5"/>
        <end position="8"/>
    </location>
</feature>
<feature type="turn" evidence="3">
    <location>
        <begin position="11"/>
        <end position="13"/>
    </location>
</feature>
<feature type="strand" evidence="3">
    <location>
        <begin position="16"/>
        <end position="27"/>
    </location>
</feature>
<feature type="turn" evidence="3">
    <location>
        <begin position="28"/>
        <end position="30"/>
    </location>
</feature>
<feature type="strand" evidence="3">
    <location>
        <begin position="31"/>
        <end position="39"/>
    </location>
</feature>
<feature type="turn" evidence="3">
    <location>
        <begin position="43"/>
        <end position="45"/>
    </location>
</feature>
<feature type="helix" evidence="3">
    <location>
        <begin position="50"/>
        <end position="68"/>
    </location>
</feature>
<feature type="strand" evidence="3">
    <location>
        <begin position="72"/>
        <end position="81"/>
    </location>
</feature>
<feature type="strand" evidence="3">
    <location>
        <begin position="85"/>
        <end position="94"/>
    </location>
</feature>
<feature type="helix" evidence="3">
    <location>
        <begin position="98"/>
        <end position="112"/>
    </location>
</feature>
<feature type="turn" evidence="3">
    <location>
        <begin position="123"/>
        <end position="125"/>
    </location>
</feature>
<feature type="turn" evidence="3">
    <location>
        <begin position="127"/>
        <end position="130"/>
    </location>
</feature>
<feature type="helix" evidence="3">
    <location>
        <begin position="134"/>
        <end position="145"/>
    </location>
</feature>
<feature type="helix" evidence="3">
    <location>
        <begin position="149"/>
        <end position="152"/>
    </location>
</feature>
<name>LUXS_BACSU</name>
<comment type="function">
    <text>Involved in the synthesis of autoinducer 2 (AI-2) which is secreted by bacteria and is used to communicate both the cell density and the metabolic potential of the environment. The regulation of gene expression in response to changes in cell density is called quorum sensing. Catalyzes the transformation of S-ribosylhomocysteine (RHC) to homocysteine (HC) and 4,5-dihydroxy-2,3-pentadione (DPD).</text>
</comment>
<comment type="catalytic activity">
    <reaction>
        <text>S-(5-deoxy-D-ribos-5-yl)-L-homocysteine = (S)-4,5-dihydroxypentane-2,3-dione + L-homocysteine</text>
        <dbReference type="Rhea" id="RHEA:17753"/>
        <dbReference type="ChEBI" id="CHEBI:29484"/>
        <dbReference type="ChEBI" id="CHEBI:58195"/>
        <dbReference type="ChEBI" id="CHEBI:58199"/>
        <dbReference type="EC" id="4.4.1.21"/>
    </reaction>
</comment>
<comment type="cofactor">
    <cofactor evidence="1">
        <name>Fe cation</name>
        <dbReference type="ChEBI" id="CHEBI:24875"/>
    </cofactor>
    <text evidence="1">Binds 1 Fe cation per subunit.</text>
</comment>
<comment type="subunit">
    <text>Homodimer.</text>
</comment>
<comment type="similarity">
    <text evidence="2">Belongs to the LuxS family.</text>
</comment>
<proteinExistence type="evidence at protein level"/>
<keyword id="KW-0002">3D-structure</keyword>
<keyword id="KW-0071">Autoinducer synthesis</keyword>
<keyword id="KW-0408">Iron</keyword>
<keyword id="KW-0456">Lyase</keyword>
<keyword id="KW-0479">Metal-binding</keyword>
<keyword id="KW-0673">Quorum sensing</keyword>
<keyword id="KW-1185">Reference proteome</keyword>